<keyword id="KW-0002">3D-structure</keyword>
<keyword id="KW-0025">Alternative splicing</keyword>
<keyword id="KW-0106">Calcium</keyword>
<keyword id="KW-1003">Cell membrane</keyword>
<keyword id="KW-0449">Lipoprotein</keyword>
<keyword id="KW-0472">Membrane</keyword>
<keyword id="KW-0539">Nucleus</keyword>
<keyword id="KW-0564">Palmitate</keyword>
<keyword id="KW-0597">Phosphoprotein</keyword>
<keyword id="KW-1267">Proteomics identification</keyword>
<keyword id="KW-1185">Reference proteome</keyword>
<keyword id="KW-0677">Repeat</keyword>
<keyword id="KW-0729">SH3-binding</keyword>
<keyword id="KW-0812">Transmembrane</keyword>
<keyword id="KW-1133">Transmembrane helix</keyword>
<name>PLS4_HUMAN</name>
<sequence>MSGVVPTAPEQPAGEMENQTKPPDPRPDAPPEYNSHFLPGPPGTAVPPPTGYPGGLPMGYYSPQQPSTFPLYQPVGGIHPVRYQPGKYPMPNQSVPITWMPGPTPMANCPPGLEYLVQLDNIHVLQHFEPLEMMTCFETNNRYDIKNNSDQMVYIVTEDTDDFTRNAYRTLRPFVLRVTDCMGREIMTMQRPFRCTCCCFCCPSARQELEVQCPPGVTIGFVAEHWNLCRAVYSIQNEKKENVMRVRGPCSTYGCGSDSVFEVKSLDGISNIGSIIRKWNGLLSAMADADHFDIHFPLDLDVKMKAMIFGACFLIDFMYFERSPPQRSR</sequence>
<proteinExistence type="evidence at protein level"/>
<feature type="chain" id="PRO_0000100792" description="Phospholipid scramblase 4">
    <location>
        <begin position="1"/>
        <end position="329"/>
    </location>
</feature>
<feature type="topological domain" description="Cytoplasmic" evidence="1">
    <location>
        <begin position="1"/>
        <end position="303"/>
    </location>
</feature>
<feature type="transmembrane region" description="Helical" evidence="1">
    <location>
        <begin position="304"/>
        <end position="320"/>
    </location>
</feature>
<feature type="topological domain" description="Extracellular" evidence="1">
    <location>
        <begin position="321"/>
        <end position="329"/>
    </location>
</feature>
<feature type="region of interest" description="Proline-rich domain (PRD)" evidence="1">
    <location>
        <begin position="1"/>
        <end position="98"/>
    </location>
</feature>
<feature type="region of interest" description="Disordered" evidence="3">
    <location>
        <begin position="1"/>
        <end position="51"/>
    </location>
</feature>
<feature type="short sequence motif" description="SH3-binding 1" evidence="2">
    <location>
        <begin position="18"/>
        <end position="25"/>
    </location>
</feature>
<feature type="short sequence motif" description="PPxY motif" evidence="2">
    <location>
        <begin position="30"/>
        <end position="33"/>
    </location>
</feature>
<feature type="short sequence motif" description="SH3-binding 2" evidence="2">
    <location>
        <begin position="41"/>
        <end position="49"/>
    </location>
</feature>
<feature type="short sequence motif" description="SH3-binding 3" evidence="2">
    <location>
        <begin position="98"/>
        <end position="106"/>
    </location>
</feature>
<feature type="short sequence motif" description="Nuclear localization signal" evidence="6">
    <location>
        <begin position="271"/>
        <end position="283"/>
    </location>
</feature>
<feature type="compositionally biased region" description="Pro residues" evidence="3">
    <location>
        <begin position="39"/>
        <end position="51"/>
    </location>
</feature>
<feature type="modified residue" description="Phosphotyrosine; by ABL" evidence="1">
    <location>
        <position position="83"/>
    </location>
</feature>
<feature type="modified residue" description="Phosphotyrosine; by ABL" evidence="1">
    <location>
        <position position="88"/>
    </location>
</feature>
<feature type="lipid moiety-binding region" description="S-palmitoyl cysteine" evidence="1">
    <location>
        <position position="197"/>
    </location>
</feature>
<feature type="lipid moiety-binding region" description="S-palmitoyl cysteine" evidence="1">
    <location>
        <position position="198"/>
    </location>
</feature>
<feature type="lipid moiety-binding region" description="S-palmitoyl cysteine" evidence="1">
    <location>
        <position position="199"/>
    </location>
</feature>
<feature type="lipid moiety-binding region" description="S-palmitoyl cysteine" evidence="1">
    <location>
        <position position="201"/>
    </location>
</feature>
<feature type="lipid moiety-binding region" description="S-palmitoyl cysteine" evidence="1">
    <location>
        <position position="202"/>
    </location>
</feature>
<feature type="splice variant" id="VSP_042931" description="In isoform 2." evidence="9">
    <location>
        <begin position="1"/>
        <end position="15"/>
    </location>
</feature>
<feature type="splice variant" id="VSP_042932" description="In isoform 2." evidence="9">
    <location>
        <begin position="119"/>
        <end position="208"/>
    </location>
</feature>
<feature type="sequence variant" id="VAR_011315" description="In dbSNP:rs3762685." evidence="4 8">
    <original>N</original>
    <variation>S</variation>
    <location>
        <position position="34"/>
    </location>
</feature>
<feature type="sequence variant" id="VAR_011316" description="In dbSNP:rs1061409." evidence="4 8">
    <original>I</original>
    <variation>V</variation>
    <location>
        <position position="155"/>
    </location>
</feature>
<feature type="mutagenesis site" description="Affects plasma membrane localization." evidence="6">
    <original>CCCFCCPS</original>
    <variation>AAAFAAPA</variation>
    <location>
        <begin position="197"/>
        <end position="204"/>
    </location>
</feature>
<feature type="mutagenesis site" description="Reduces nuclear localization." evidence="6">
    <original>RKW</original>
    <variation>AAA</variation>
    <location>
        <begin position="277"/>
        <end position="279"/>
    </location>
</feature>
<feature type="mutagenesis site" description="Markedly reduces nuclear localization." evidence="6">
    <original>R</original>
    <variation>A</variation>
    <location>
        <position position="277"/>
    </location>
</feature>
<feature type="mutagenesis site" description="50% decrease in scramblase activity in presence of Ca2+, and 40% decrease in scramblase activity in presence of Mg2+." evidence="7">
    <original>D</original>
    <variation>A</variation>
    <location>
        <position position="290"/>
    </location>
</feature>
<feature type="sequence conflict" description="In Ref. 8; AAP97186." evidence="10" ref="8">
    <original>LP</original>
    <variation>FL</variation>
    <location>
        <begin position="56"/>
        <end position="57"/>
    </location>
</feature>
<feature type="sequence conflict" description="In Ref. 2; AAT52217." evidence="10" ref="2">
    <original>P</original>
    <variation>S</variation>
    <location>
        <position position="74"/>
    </location>
</feature>
<feature type="sequence conflict" description="In Ref. 8; AAP97186." evidence="10" ref="8">
    <original>S</original>
    <variation>L</variation>
    <location>
        <position position="149"/>
    </location>
</feature>
<feature type="sequence conflict" description="In Ref. 8; AAP97186." evidence="10" ref="8">
    <original>F</original>
    <variation>V</variation>
    <location>
        <position position="163"/>
    </location>
</feature>
<feature type="sequence conflict" description="In Ref. 8; AAP97186." evidence="10" ref="8">
    <original>V</original>
    <variation>G</variation>
    <location>
        <position position="175"/>
    </location>
</feature>
<organism>
    <name type="scientific">Homo sapiens</name>
    <name type="common">Human</name>
    <dbReference type="NCBI Taxonomy" id="9606"/>
    <lineage>
        <taxon>Eukaryota</taxon>
        <taxon>Metazoa</taxon>
        <taxon>Chordata</taxon>
        <taxon>Craniata</taxon>
        <taxon>Vertebrata</taxon>
        <taxon>Euteleostomi</taxon>
        <taxon>Mammalia</taxon>
        <taxon>Eutheria</taxon>
        <taxon>Euarchontoglires</taxon>
        <taxon>Primates</taxon>
        <taxon>Haplorrhini</taxon>
        <taxon>Catarrhini</taxon>
        <taxon>Hominidae</taxon>
        <taxon>Homo</taxon>
    </lineage>
</organism>
<comment type="function">
    <text evidence="7">Catalyzes metal ion-induced ATP-independent rapid bidirectional and non-specific movement of phospholipids (lipid scrambling or lipid flip-flop) between the inner and outer leaflet of the plasma membrane and participates in the redistribution of phospholipids between membrane leaflets (PubMed:23089641). Metal ions bind to the calcium-binding site and induce conformation change in the protein (PubMed:23089641). Has a greater affi nity for Ca(2+) than Mg(2+) and Zn(2+) (PubMed:23089641).</text>
</comment>
<comment type="catalytic activity">
    <reaction evidence="7">
        <text>a 1,2-diacyl-sn-glycero-3-phosphocholine(in) = a 1,2-diacyl-sn-glycero-3-phosphocholine(out)</text>
        <dbReference type="Rhea" id="RHEA:38571"/>
        <dbReference type="ChEBI" id="CHEBI:57643"/>
    </reaction>
    <physiologicalReaction direction="left-to-right" evidence="12">
        <dbReference type="Rhea" id="RHEA:38572"/>
    </physiologicalReaction>
    <physiologicalReaction direction="right-to-left" evidence="12">
        <dbReference type="Rhea" id="RHEA:38573"/>
    </physiologicalReaction>
</comment>
<comment type="catalytic activity">
    <reaction evidence="7">
        <text>a 1,2-diacyl-sn-glycero-3-phospho-L-serine(in) = a 1,2-diacyl-sn-glycero-3-phospho-L-serine(out)</text>
        <dbReference type="Rhea" id="RHEA:38663"/>
        <dbReference type="ChEBI" id="CHEBI:57262"/>
    </reaction>
    <physiologicalReaction direction="left-to-right" evidence="12">
        <dbReference type="Rhea" id="RHEA:38664"/>
    </physiologicalReaction>
    <physiologicalReaction direction="right-to-left" evidence="12">
        <dbReference type="Rhea" id="RHEA:38665"/>
    </physiologicalReaction>
</comment>
<comment type="cofactor">
    <cofactor evidence="7">
        <name>Ca(2+)</name>
        <dbReference type="ChEBI" id="CHEBI:29108"/>
    </cofactor>
    <cofactor evidence="7">
        <name>Mg(2+)</name>
        <dbReference type="ChEBI" id="CHEBI:18420"/>
    </cofactor>
    <cofactor evidence="7">
        <name>Zn(2+)</name>
        <dbReference type="ChEBI" id="CHEBI:29105"/>
    </cofactor>
</comment>
<comment type="subunit">
    <text evidence="5 6">Interacts with PDCD6 (PubMed:18256029). Interacts with KPNA2; this interaction mediates the nucleus import of PLSCR4 (PubMed:21690087).</text>
</comment>
<comment type="interaction">
    <interactant intactId="EBI-769257">
        <id>Q9NRQ2</id>
    </interactant>
    <interactant intactId="EBI-10173507">
        <id>Q6UY14-3</id>
        <label>ADAMTSL4</label>
    </interactant>
    <organismsDiffer>false</organismsDiffer>
    <experiments>3</experiments>
</comment>
<comment type="interaction">
    <interactant intactId="EBI-769257">
        <id>Q9NRQ2</id>
    </interactant>
    <interactant intactId="EBI-12811889">
        <id>Q9Y6H3</id>
        <label>ATP23</label>
    </interactant>
    <organismsDiffer>false</organismsDiffer>
    <experiments>3</experiments>
</comment>
<comment type="interaction">
    <interactant intactId="EBI-769257">
        <id>Q9NRQ2</id>
    </interactant>
    <interactant intactId="EBI-12360993">
        <id>P23141-3</id>
        <label>CES1</label>
    </interactant>
    <organismsDiffer>false</organismsDiffer>
    <experiments>3</experiments>
</comment>
<comment type="interaction">
    <interactant intactId="EBI-769257">
        <id>Q9NRQ2</id>
    </interactant>
    <interactant intactId="EBI-718615">
        <id>Q9H5F2</id>
        <label>CFAP68</label>
    </interactant>
    <organismsDiffer>false</organismsDiffer>
    <experiments>5</experiments>
</comment>
<comment type="interaction">
    <interactant intactId="EBI-769257">
        <id>Q9NRQ2</id>
    </interactant>
    <interactant intactId="EBI-1056029">
        <id>Q16740</id>
        <label>CLPP</label>
    </interactant>
    <organismsDiffer>false</organismsDiffer>
    <experiments>3</experiments>
</comment>
<comment type="interaction">
    <interactant intactId="EBI-769257">
        <id>Q9NRQ2</id>
    </interactant>
    <interactant intactId="EBI-713677">
        <id>Q9UGL9</id>
        <label>CRCT1</label>
    </interactant>
    <organismsDiffer>false</organismsDiffer>
    <experiments>3</experiments>
</comment>
<comment type="interaction">
    <interactant intactId="EBI-769257">
        <id>Q9NRQ2</id>
    </interactant>
    <interactant intactId="EBI-724310">
        <id>Q15038</id>
        <label>DAZAP2</label>
    </interactant>
    <organismsDiffer>false</organismsDiffer>
    <experiments>3</experiments>
</comment>
<comment type="interaction">
    <interactant intactId="EBI-769257">
        <id>Q9NRQ2</id>
    </interactant>
    <interactant intactId="EBI-742054">
        <id>Q96D03</id>
        <label>DDIT4L</label>
    </interactant>
    <organismsDiffer>false</organismsDiffer>
    <experiments>3</experiments>
</comment>
<comment type="interaction">
    <interactant intactId="EBI-769257">
        <id>Q9NRQ2</id>
    </interactant>
    <interactant intactId="EBI-11977403">
        <id>A0A0C3SFZ9</id>
        <label>FCHO1</label>
    </interactant>
    <organismsDiffer>false</organismsDiffer>
    <experiments>3</experiments>
</comment>
<comment type="interaction">
    <interactant intactId="EBI-769257">
        <id>Q9NRQ2</id>
    </interactant>
    <interactant intactId="EBI-9090198">
        <id>P15976-2</id>
        <label>GATA1</label>
    </interactant>
    <organismsDiffer>false</organismsDiffer>
    <experiments>3</experiments>
</comment>
<comment type="interaction">
    <interactant intactId="EBI-769257">
        <id>Q9NRQ2</id>
    </interactant>
    <interactant intactId="EBI-745201">
        <id>Q9BSH5</id>
        <label>HDHD3</label>
    </interactant>
    <organismsDiffer>false</organismsDiffer>
    <experiments>3</experiments>
</comment>
<comment type="interaction">
    <interactant intactId="EBI-769257">
        <id>Q9NRQ2</id>
    </interactant>
    <interactant intactId="EBI-740785">
        <id>P49639</id>
        <label>HOXA1</label>
    </interactant>
    <organismsDiffer>false</organismsDiffer>
    <experiments>5</experiments>
</comment>
<comment type="interaction">
    <interactant intactId="EBI-769257">
        <id>Q9NRQ2</id>
    </interactant>
    <interactant intactId="EBI-748258">
        <id>Q5TA45</id>
        <label>INTS11</label>
    </interactant>
    <organismsDiffer>false</organismsDiffer>
    <experiments>3</experiments>
</comment>
<comment type="interaction">
    <interactant intactId="EBI-769257">
        <id>Q9NRQ2</id>
    </interactant>
    <interactant intactId="EBI-11051601">
        <id>P16144-2</id>
        <label>ITGB4</label>
    </interactant>
    <organismsDiffer>false</organismsDiffer>
    <experiments>3</experiments>
</comment>
<comment type="interaction">
    <interactant intactId="EBI-769257">
        <id>Q9NRQ2</id>
    </interactant>
    <interactant intactId="EBI-6426443">
        <id>Q2WGJ6</id>
        <label>KLHL38</label>
    </interactant>
    <organismsDiffer>false</organismsDiffer>
    <experiments>3</experiments>
</comment>
<comment type="interaction">
    <interactant intactId="EBI-769257">
        <id>Q9NRQ2</id>
    </interactant>
    <interactant intactId="EBI-10981970">
        <id>Q5T749</id>
        <label>KPRP</label>
    </interactant>
    <organismsDiffer>false</organismsDiffer>
    <experiments>3</experiments>
</comment>
<comment type="interaction">
    <interactant intactId="EBI-769257">
        <id>Q9NRQ2</id>
    </interactant>
    <interactant intactId="EBI-1045341">
        <id>Q9NSB4</id>
        <label>KRT82</label>
    </interactant>
    <organismsDiffer>false</organismsDiffer>
    <experiments>3</experiments>
</comment>
<comment type="interaction">
    <interactant intactId="EBI-769257">
        <id>Q9NRQ2</id>
    </interactant>
    <interactant intactId="EBI-11741292">
        <id>Q9BYS1</id>
        <label>KRTAP1-5</label>
    </interactant>
    <organismsDiffer>false</organismsDiffer>
    <experiments>3</experiments>
</comment>
<comment type="interaction">
    <interactant intactId="EBI-769257">
        <id>Q9NRQ2</id>
    </interactant>
    <interactant intactId="EBI-10171774">
        <id>P60410</id>
        <label>KRTAP10-8</label>
    </interactant>
    <organismsDiffer>false</organismsDiffer>
    <experiments>3</experiments>
</comment>
<comment type="interaction">
    <interactant intactId="EBI-769257">
        <id>Q9NRQ2</id>
    </interactant>
    <interactant intactId="EBI-12811111">
        <id>Q8IUB9</id>
        <label>KRTAP19-1</label>
    </interactant>
    <organismsDiffer>false</organismsDiffer>
    <experiments>3</experiments>
</comment>
<comment type="interaction">
    <interactant intactId="EBI-769257">
        <id>Q9NRQ2</id>
    </interactant>
    <interactant intactId="EBI-1048945">
        <id>Q3LI72</id>
        <label>KRTAP19-5</label>
    </interactant>
    <organismsDiffer>false</organismsDiffer>
    <experiments>3</experiments>
</comment>
<comment type="interaction">
    <interactant intactId="EBI-769257">
        <id>Q9NRQ2</id>
    </interactant>
    <interactant intactId="EBI-12805508">
        <id>Q3LI70</id>
        <label>KRTAP19-6</label>
    </interactant>
    <organismsDiffer>false</organismsDiffer>
    <experiments>3</experiments>
</comment>
<comment type="interaction">
    <interactant intactId="EBI-769257">
        <id>Q9NRQ2</id>
    </interactant>
    <interactant intactId="EBI-10241353">
        <id>Q3SYF9</id>
        <label>KRTAP19-7</label>
    </interactant>
    <organismsDiffer>false</organismsDiffer>
    <experiments>3</experiments>
</comment>
<comment type="interaction">
    <interactant intactId="EBI-769257">
        <id>Q9NRQ2</id>
    </interactant>
    <interactant intactId="EBI-18395721">
        <id>Q3LI59</id>
        <label>KRTAP21-2</label>
    </interactant>
    <organismsDiffer>false</organismsDiffer>
    <experiments>3</experiments>
</comment>
<comment type="interaction">
    <interactant intactId="EBI-769257">
        <id>Q9NRQ2</id>
    </interactant>
    <interactant intactId="EBI-9996449">
        <id>Q9BYR8</id>
        <label>KRTAP3-1</label>
    </interactant>
    <organismsDiffer>false</organismsDiffer>
    <experiments>3</experiments>
</comment>
<comment type="interaction">
    <interactant intactId="EBI-769257">
        <id>Q9NRQ2</id>
    </interactant>
    <interactant intactId="EBI-3957694">
        <id>Q9BYR6</id>
        <label>KRTAP3-3</label>
    </interactant>
    <organismsDiffer>false</organismsDiffer>
    <experiments>3</experiments>
</comment>
<comment type="interaction">
    <interactant intactId="EBI-769257">
        <id>Q9NRQ2</id>
    </interactant>
    <interactant intactId="EBI-10172511">
        <id>Q9BYR5</id>
        <label>KRTAP4-2</label>
    </interactant>
    <organismsDiffer>false</organismsDiffer>
    <experiments>3</experiments>
</comment>
<comment type="interaction">
    <interactant intactId="EBI-769257">
        <id>Q9NRQ2</id>
    </interactant>
    <interactant intactId="EBI-12111050">
        <id>Q3LI64</id>
        <label>KRTAP6-1</label>
    </interactant>
    <organismsDiffer>false</organismsDiffer>
    <experiments>4</experiments>
</comment>
<comment type="interaction">
    <interactant intactId="EBI-769257">
        <id>Q9NRQ2</id>
    </interactant>
    <interactant intactId="EBI-11962084">
        <id>Q3LI66</id>
        <label>KRTAP6-2</label>
    </interactant>
    <organismsDiffer>false</organismsDiffer>
    <experiments>3</experiments>
</comment>
<comment type="interaction">
    <interactant intactId="EBI-769257">
        <id>Q9NRQ2</id>
    </interactant>
    <interactant intactId="EBI-22311199">
        <id>Q3LI67</id>
        <label>KRTAP6-3</label>
    </interactant>
    <organismsDiffer>false</organismsDiffer>
    <experiments>3</experiments>
</comment>
<comment type="interaction">
    <interactant intactId="EBI-769257">
        <id>Q9NRQ2</id>
    </interactant>
    <interactant intactId="EBI-10261141">
        <id>Q8IUC2</id>
        <label>KRTAP8-1</label>
    </interactant>
    <organismsDiffer>false</organismsDiffer>
    <experiments>3</experiments>
</comment>
<comment type="interaction">
    <interactant intactId="EBI-769257">
        <id>Q9NRQ2</id>
    </interactant>
    <interactant intactId="EBI-11962058">
        <id>Q5T7P2</id>
        <label>LCE1A</label>
    </interactant>
    <organismsDiffer>false</organismsDiffer>
    <experiments>3</experiments>
</comment>
<comment type="interaction">
    <interactant intactId="EBI-769257">
        <id>Q9NRQ2</id>
    </interactant>
    <interactant intactId="EBI-12224199">
        <id>Q5T751</id>
        <label>LCE1C</label>
    </interactant>
    <organismsDiffer>false</organismsDiffer>
    <experiments>3</experiments>
</comment>
<comment type="interaction">
    <interactant intactId="EBI-769257">
        <id>Q9NRQ2</id>
    </interactant>
    <interactant intactId="EBI-11478468">
        <id>O14633</id>
        <label>LCE2B</label>
    </interactant>
    <organismsDiffer>false</organismsDiffer>
    <experiments>3</experiments>
</comment>
<comment type="interaction">
    <interactant intactId="EBI-769257">
        <id>Q9NRQ2</id>
    </interactant>
    <interactant intactId="EBI-11955689">
        <id>Q5TCM9</id>
        <label>LCE5A</label>
    </interactant>
    <organismsDiffer>false</organismsDiffer>
    <experiments>3</experiments>
</comment>
<comment type="interaction">
    <interactant intactId="EBI-769257">
        <id>Q9NRQ2</id>
    </interactant>
    <interactant intactId="EBI-742948">
        <id>Q5JR59</id>
        <label>MTUS2</label>
    </interactant>
    <organismsDiffer>false</organismsDiffer>
    <experiments>5</experiments>
</comment>
<comment type="interaction">
    <interactant intactId="EBI-769257">
        <id>Q9NRQ2</id>
    </interactant>
    <interactant intactId="EBI-10261509">
        <id>Q8IV28</id>
        <label>NID2</label>
    </interactant>
    <organismsDiffer>false</organismsDiffer>
    <experiments>3</experiments>
</comment>
<comment type="interaction">
    <interactant intactId="EBI-769257">
        <id>Q9NRQ2</id>
    </interactant>
    <interactant intactId="EBI-945833">
        <id>Q7Z3S9</id>
        <label>NOTCH2NLA</label>
    </interactant>
    <organismsDiffer>false</organismsDiffer>
    <experiments>5</experiments>
</comment>
<comment type="interaction">
    <interactant intactId="EBI-769257">
        <id>Q9NRQ2</id>
    </interactant>
    <interactant intactId="EBI-12813389">
        <id>Q8TDS5</id>
        <label>OXER1</label>
    </interactant>
    <organismsDiffer>false</organismsDiffer>
    <experiments>3</experiments>
</comment>
<comment type="interaction">
    <interactant intactId="EBI-769257">
        <id>Q9NRQ2</id>
    </interactant>
    <interactant intactId="EBI-11956269">
        <id>Q92824-2</id>
        <label>PCSK5</label>
    </interactant>
    <organismsDiffer>false</organismsDiffer>
    <experiments>3</experiments>
</comment>
<comment type="interaction">
    <interactant intactId="EBI-769257">
        <id>Q9NRQ2</id>
    </interactant>
    <interactant intactId="EBI-744023">
        <id>Q9BTL3</id>
        <label>RAMAC</label>
    </interactant>
    <organismsDiffer>false</organismsDiffer>
    <experiments>3</experiments>
</comment>
<comment type="interaction">
    <interactant intactId="EBI-769257">
        <id>Q9NRQ2</id>
    </interactant>
    <interactant intactId="EBI-12806054">
        <id>P10745</id>
        <label>RBP3</label>
    </interactant>
    <organismsDiffer>false</organismsDiffer>
    <experiments>3</experiments>
</comment>
<comment type="interaction">
    <interactant intactId="EBI-769257">
        <id>Q9NRQ2</id>
    </interactant>
    <interactant intactId="EBI-740343">
        <id>Q93062-3</id>
        <label>RBPMS</label>
    </interactant>
    <organismsDiffer>false</organismsDiffer>
    <experiments>3</experiments>
</comment>
<comment type="interaction">
    <interactant intactId="EBI-769257">
        <id>Q9NRQ2</id>
    </interactant>
    <interactant intactId="EBI-357375">
        <id>P62979</id>
        <label>RPS27A</label>
    </interactant>
    <organismsDiffer>false</organismsDiffer>
    <experiments>3</experiments>
</comment>
<comment type="interaction">
    <interactant intactId="EBI-769257">
        <id>Q9NRQ2</id>
    </interactant>
    <interactant intactId="EBI-12806032">
        <id>Q16348</id>
        <label>SLC15A2</label>
    </interactant>
    <organismsDiffer>false</organismsDiffer>
    <experiments>3</experiments>
</comment>
<comment type="interaction">
    <interactant intactId="EBI-769257">
        <id>Q9NRQ2</id>
    </interactant>
    <interactant intactId="EBI-10239812">
        <id>Q96M29</id>
        <label>TEKT5</label>
    </interactant>
    <organismsDiffer>false</organismsDiffer>
    <experiments>3</experiments>
</comment>
<comment type="interaction">
    <interactant intactId="EBI-769257">
        <id>Q9NRQ2</id>
    </interactant>
    <interactant intactId="EBI-12827077">
        <id>Q6N022</id>
        <label>TENM4</label>
    </interactant>
    <organismsDiffer>false</organismsDiffer>
    <experiments>3</experiments>
</comment>
<comment type="interaction">
    <interactant intactId="EBI-769257">
        <id>Q9NRQ2</id>
    </interactant>
    <interactant intactId="EBI-5235829">
        <id>Q8IWZ5</id>
        <label>TRIM42</label>
    </interactant>
    <organismsDiffer>false</organismsDiffer>
    <experiments>5</experiments>
</comment>
<comment type="interaction">
    <interactant intactId="EBI-769257">
        <id>Q9NRQ2</id>
    </interactant>
    <interactant intactId="EBI-358993">
        <id>Q15645</id>
        <label>TRIP13</label>
    </interactant>
    <organismsDiffer>false</organismsDiffer>
    <experiments>5</experiments>
</comment>
<comment type="interaction">
    <interactant intactId="EBI-769257">
        <id>Q9NRQ2</id>
    </interactant>
    <interactant intactId="EBI-8652667">
        <id>O14817</id>
        <label>TSPAN4</label>
    </interactant>
    <organismsDiffer>false</organismsDiffer>
    <experiments>3</experiments>
</comment>
<comment type="interaction">
    <interactant intactId="EBI-769257">
        <id>Q9NRQ2</id>
    </interactant>
    <interactant intactId="EBI-357304">
        <id>P62987</id>
        <label>UBA52</label>
    </interactant>
    <organismsDiffer>false</organismsDiffer>
    <experiments>3</experiments>
</comment>
<comment type="interaction">
    <interactant intactId="EBI-769257">
        <id>Q9NRQ2</id>
    </interactant>
    <interactant intactId="EBI-413034">
        <id>P0CG47</id>
        <label>UBB</label>
    </interactant>
    <organismsDiffer>false</organismsDiffer>
    <experiments>3</experiments>
</comment>
<comment type="interaction">
    <interactant intactId="EBI-769257">
        <id>Q9NRQ2</id>
    </interactant>
    <interactant intactId="EBI-3390054">
        <id>P0CG48</id>
        <label>UBC</label>
    </interactant>
    <organismsDiffer>false</organismsDiffer>
    <experiments>3</experiments>
</comment>
<comment type="interaction">
    <interactant intactId="EBI-769257">
        <id>Q9NRQ2</id>
    </interactant>
    <interactant intactId="EBI-2510804">
        <id>Q5VVQ6</id>
        <label>YOD1</label>
    </interactant>
    <organismsDiffer>false</organismsDiffer>
    <experiments>3</experiments>
</comment>
<comment type="interaction">
    <interactant intactId="EBI-769257">
        <id>Q9NRQ2</id>
    </interactant>
    <interactant intactId="EBI-3957603">
        <id>P09022</id>
        <label>Hoxa1</label>
    </interactant>
    <organismsDiffer>true</organismsDiffer>
    <experiments>4</experiments>
</comment>
<comment type="subcellular location">
    <subcellularLocation>
        <location evidence="6">Cell membrane</location>
        <topology evidence="1">Single-pass type II membrane protein</topology>
    </subcellularLocation>
    <subcellularLocation>
        <location evidence="11">Cell membrane</location>
        <topology evidence="11">Lipid-anchor</topology>
        <orientation evidence="1">Cytoplasmic side</orientation>
    </subcellularLocation>
    <subcellularLocation>
        <location evidence="6">Nucleus</location>
    </subcellularLocation>
    <text evidence="11">Palmitoylation regulates its localization to the cell membrane or the nucleus; trafficking to the cell membrane is dependent upon palmitoylation whereas in the absence of palmitoylation, localizes to the nucleus.</text>
</comment>
<comment type="alternative products">
    <event type="alternative splicing"/>
    <isoform>
        <id>Q9NRQ2-1</id>
        <name>1</name>
        <sequence type="displayed"/>
    </isoform>
    <isoform>
        <id>Q9NRQ2-2</id>
        <name>2</name>
        <sequence type="described" ref="VSP_042931 VSP_042932"/>
    </isoform>
</comment>
<comment type="tissue specificity">
    <text evidence="4">Expressed in heart, brain, placenta, lung, liver, kidney, pancreas, spleen, thymus, prostate, testis, uterus, small intestine and colon. Not detected in peripheral blood lymphocytes.</text>
</comment>
<comment type="domain">
    <text evidence="1">The N-terminal proline-rich domain (PRD) is required for phospholipid scramblase activity.</text>
</comment>
<comment type="similarity">
    <text evidence="10">Belongs to the phospholipid scramblase family.</text>
</comment>
<comment type="sequence caution" evidence="10">
    <conflict type="frameshift">
        <sequence resource="EMBL-CDS" id="AAP97186"/>
    </conflict>
</comment>
<protein>
    <recommendedName>
        <fullName evidence="10">Phospholipid scramblase 4</fullName>
        <shortName>PL scramblase 4</shortName>
    </recommendedName>
    <alternativeName>
        <fullName>Ca(2+)-dependent phospholipid scramblase 4</fullName>
    </alternativeName>
    <alternativeName>
        <fullName>Cell growth-inhibiting gene 43 protein</fullName>
    </alternativeName>
    <alternativeName>
        <fullName>TRA1</fullName>
    </alternativeName>
</protein>
<reference key="1">
    <citation type="journal article" date="2000" name="Biochim. Biophys. Acta">
        <title>Identification of three new members of the phospholipid scramblase gene family.</title>
        <authorList>
            <person name="Wiedmer T."/>
            <person name="Zhou Q."/>
            <person name="Kwoh D.Y."/>
            <person name="Sims P.J."/>
        </authorList>
    </citation>
    <scope>NUCLEOTIDE SEQUENCE [MRNA] (ISOFORM 1)</scope>
    <scope>TISSUE SPECIFICITY</scope>
    <scope>VARIANTS SER-34 AND VAL-155</scope>
    <source>
        <tissue>Pancreas</tissue>
    </source>
</reference>
<reference key="2">
    <citation type="submission" date="2004-02" db="EMBL/GenBank/DDBJ databases">
        <title>Identification of a human cell growth inhibiting gene.</title>
        <authorList>
            <person name="Kim J.W."/>
        </authorList>
    </citation>
    <scope>NUCLEOTIDE SEQUENCE [LARGE SCALE MRNA] (ISOFORM 1)</scope>
    <scope>VARIANTS SER-34 AND VAL-155</scope>
</reference>
<reference key="3">
    <citation type="journal article" date="2004" name="Nat. Genet.">
        <title>Complete sequencing and characterization of 21,243 full-length human cDNAs.</title>
        <authorList>
            <person name="Ota T."/>
            <person name="Suzuki Y."/>
            <person name="Nishikawa T."/>
            <person name="Otsuki T."/>
            <person name="Sugiyama T."/>
            <person name="Irie R."/>
            <person name="Wakamatsu A."/>
            <person name="Hayashi K."/>
            <person name="Sato H."/>
            <person name="Nagai K."/>
            <person name="Kimura K."/>
            <person name="Makita H."/>
            <person name="Sekine M."/>
            <person name="Obayashi M."/>
            <person name="Nishi T."/>
            <person name="Shibahara T."/>
            <person name="Tanaka T."/>
            <person name="Ishii S."/>
            <person name="Yamamoto J."/>
            <person name="Saito K."/>
            <person name="Kawai Y."/>
            <person name="Isono Y."/>
            <person name="Nakamura Y."/>
            <person name="Nagahari K."/>
            <person name="Murakami K."/>
            <person name="Yasuda T."/>
            <person name="Iwayanagi T."/>
            <person name="Wagatsuma M."/>
            <person name="Shiratori A."/>
            <person name="Sudo H."/>
            <person name="Hosoiri T."/>
            <person name="Kaku Y."/>
            <person name="Kodaira H."/>
            <person name="Kondo H."/>
            <person name="Sugawara M."/>
            <person name="Takahashi M."/>
            <person name="Kanda K."/>
            <person name="Yokoi T."/>
            <person name="Furuya T."/>
            <person name="Kikkawa E."/>
            <person name="Omura Y."/>
            <person name="Abe K."/>
            <person name="Kamihara K."/>
            <person name="Katsuta N."/>
            <person name="Sato K."/>
            <person name="Tanikawa M."/>
            <person name="Yamazaki M."/>
            <person name="Ninomiya K."/>
            <person name="Ishibashi T."/>
            <person name="Yamashita H."/>
            <person name="Murakawa K."/>
            <person name="Fujimori K."/>
            <person name="Tanai H."/>
            <person name="Kimata M."/>
            <person name="Watanabe M."/>
            <person name="Hiraoka S."/>
            <person name="Chiba Y."/>
            <person name="Ishida S."/>
            <person name="Ono Y."/>
            <person name="Takiguchi S."/>
            <person name="Watanabe S."/>
            <person name="Yosida M."/>
            <person name="Hotuta T."/>
            <person name="Kusano J."/>
            <person name="Kanehori K."/>
            <person name="Takahashi-Fujii A."/>
            <person name="Hara H."/>
            <person name="Tanase T.-O."/>
            <person name="Nomura Y."/>
            <person name="Togiya S."/>
            <person name="Komai F."/>
            <person name="Hara R."/>
            <person name="Takeuchi K."/>
            <person name="Arita M."/>
            <person name="Imose N."/>
            <person name="Musashino K."/>
            <person name="Yuuki H."/>
            <person name="Oshima A."/>
            <person name="Sasaki N."/>
            <person name="Aotsuka S."/>
            <person name="Yoshikawa Y."/>
            <person name="Matsunawa H."/>
            <person name="Ichihara T."/>
            <person name="Shiohata N."/>
            <person name="Sano S."/>
            <person name="Moriya S."/>
            <person name="Momiyama H."/>
            <person name="Satoh N."/>
            <person name="Takami S."/>
            <person name="Terashima Y."/>
            <person name="Suzuki O."/>
            <person name="Nakagawa S."/>
            <person name="Senoh A."/>
            <person name="Mizoguchi H."/>
            <person name="Goto Y."/>
            <person name="Shimizu F."/>
            <person name="Wakebe H."/>
            <person name="Hishigaki H."/>
            <person name="Watanabe T."/>
            <person name="Sugiyama A."/>
            <person name="Takemoto M."/>
            <person name="Kawakami B."/>
            <person name="Yamazaki M."/>
            <person name="Watanabe K."/>
            <person name="Kumagai A."/>
            <person name="Itakura S."/>
            <person name="Fukuzumi Y."/>
            <person name="Fujimori Y."/>
            <person name="Komiyama M."/>
            <person name="Tashiro H."/>
            <person name="Tanigami A."/>
            <person name="Fujiwara T."/>
            <person name="Ono T."/>
            <person name="Yamada K."/>
            <person name="Fujii Y."/>
            <person name="Ozaki K."/>
            <person name="Hirao M."/>
            <person name="Ohmori Y."/>
            <person name="Kawabata A."/>
            <person name="Hikiji T."/>
            <person name="Kobatake N."/>
            <person name="Inagaki H."/>
            <person name="Ikema Y."/>
            <person name="Okamoto S."/>
            <person name="Okitani R."/>
            <person name="Kawakami T."/>
            <person name="Noguchi S."/>
            <person name="Itoh T."/>
            <person name="Shigeta K."/>
            <person name="Senba T."/>
            <person name="Matsumura K."/>
            <person name="Nakajima Y."/>
            <person name="Mizuno T."/>
            <person name="Morinaga M."/>
            <person name="Sasaki M."/>
            <person name="Togashi T."/>
            <person name="Oyama M."/>
            <person name="Hata H."/>
            <person name="Watanabe M."/>
            <person name="Komatsu T."/>
            <person name="Mizushima-Sugano J."/>
            <person name="Satoh T."/>
            <person name="Shirai Y."/>
            <person name="Takahashi Y."/>
            <person name="Nakagawa K."/>
            <person name="Okumura K."/>
            <person name="Nagase T."/>
            <person name="Nomura N."/>
            <person name="Kikuchi H."/>
            <person name="Masuho Y."/>
            <person name="Yamashita R."/>
            <person name="Nakai K."/>
            <person name="Yada T."/>
            <person name="Nakamura Y."/>
            <person name="Ohara O."/>
            <person name="Isogai T."/>
            <person name="Sugano S."/>
        </authorList>
    </citation>
    <scope>NUCLEOTIDE SEQUENCE [LARGE SCALE MRNA] (ISOFORMS 1 AND 2)</scope>
    <source>
        <tissue>Thalamus</tissue>
        <tissue>Thymus</tissue>
    </source>
</reference>
<reference key="4">
    <citation type="journal article" date="2007" name="BMC Genomics">
        <title>The full-ORF clone resource of the German cDNA consortium.</title>
        <authorList>
            <person name="Bechtel S."/>
            <person name="Rosenfelder H."/>
            <person name="Duda A."/>
            <person name="Schmidt C.P."/>
            <person name="Ernst U."/>
            <person name="Wellenreuther R."/>
            <person name="Mehrle A."/>
            <person name="Schuster C."/>
            <person name="Bahr A."/>
            <person name="Bloecker H."/>
            <person name="Heubner D."/>
            <person name="Hoerlein A."/>
            <person name="Michel G."/>
            <person name="Wedler H."/>
            <person name="Koehrer K."/>
            <person name="Ottenwaelder B."/>
            <person name="Poustka A."/>
            <person name="Wiemann S."/>
            <person name="Schupp I."/>
        </authorList>
    </citation>
    <scope>NUCLEOTIDE SEQUENCE [LARGE SCALE MRNA] (ISOFORM 1)</scope>
    <source>
        <tissue>Stomach</tissue>
    </source>
</reference>
<reference key="5">
    <citation type="journal article" date="2006" name="Nature">
        <title>The DNA sequence, annotation and analysis of human chromosome 3.</title>
        <authorList>
            <person name="Muzny D.M."/>
            <person name="Scherer S.E."/>
            <person name="Kaul R."/>
            <person name="Wang J."/>
            <person name="Yu J."/>
            <person name="Sudbrak R."/>
            <person name="Buhay C.J."/>
            <person name="Chen R."/>
            <person name="Cree A."/>
            <person name="Ding Y."/>
            <person name="Dugan-Rocha S."/>
            <person name="Gill R."/>
            <person name="Gunaratne P."/>
            <person name="Harris R.A."/>
            <person name="Hawes A.C."/>
            <person name="Hernandez J."/>
            <person name="Hodgson A.V."/>
            <person name="Hume J."/>
            <person name="Jackson A."/>
            <person name="Khan Z.M."/>
            <person name="Kovar-Smith C."/>
            <person name="Lewis L.R."/>
            <person name="Lozado R.J."/>
            <person name="Metzker M.L."/>
            <person name="Milosavljevic A."/>
            <person name="Miner G.R."/>
            <person name="Morgan M.B."/>
            <person name="Nazareth L.V."/>
            <person name="Scott G."/>
            <person name="Sodergren E."/>
            <person name="Song X.-Z."/>
            <person name="Steffen D."/>
            <person name="Wei S."/>
            <person name="Wheeler D.A."/>
            <person name="Wright M.W."/>
            <person name="Worley K.C."/>
            <person name="Yuan Y."/>
            <person name="Zhang Z."/>
            <person name="Adams C.Q."/>
            <person name="Ansari-Lari M.A."/>
            <person name="Ayele M."/>
            <person name="Brown M.J."/>
            <person name="Chen G."/>
            <person name="Chen Z."/>
            <person name="Clendenning J."/>
            <person name="Clerc-Blankenburg K.P."/>
            <person name="Chen R."/>
            <person name="Chen Z."/>
            <person name="Davis C."/>
            <person name="Delgado O."/>
            <person name="Dinh H.H."/>
            <person name="Dong W."/>
            <person name="Draper H."/>
            <person name="Ernst S."/>
            <person name="Fu G."/>
            <person name="Gonzalez-Garay M.L."/>
            <person name="Garcia D.K."/>
            <person name="Gillett W."/>
            <person name="Gu J."/>
            <person name="Hao B."/>
            <person name="Haugen E."/>
            <person name="Havlak P."/>
            <person name="He X."/>
            <person name="Hennig S."/>
            <person name="Hu S."/>
            <person name="Huang W."/>
            <person name="Jackson L.R."/>
            <person name="Jacob L.S."/>
            <person name="Kelly S.H."/>
            <person name="Kube M."/>
            <person name="Levy R."/>
            <person name="Li Z."/>
            <person name="Liu B."/>
            <person name="Liu J."/>
            <person name="Liu W."/>
            <person name="Lu J."/>
            <person name="Maheshwari M."/>
            <person name="Nguyen B.-V."/>
            <person name="Okwuonu G.O."/>
            <person name="Palmeiri A."/>
            <person name="Pasternak S."/>
            <person name="Perez L.M."/>
            <person name="Phelps K.A."/>
            <person name="Plopper F.J."/>
            <person name="Qiang B."/>
            <person name="Raymond C."/>
            <person name="Rodriguez R."/>
            <person name="Saenphimmachak C."/>
            <person name="Santibanez J."/>
            <person name="Shen H."/>
            <person name="Shen Y."/>
            <person name="Subramanian S."/>
            <person name="Tabor P.E."/>
            <person name="Verduzco D."/>
            <person name="Waldron L."/>
            <person name="Wang J."/>
            <person name="Wang J."/>
            <person name="Wang Q."/>
            <person name="Williams G.A."/>
            <person name="Wong G.K.-S."/>
            <person name="Yao Z."/>
            <person name="Zhang J."/>
            <person name="Zhang X."/>
            <person name="Zhao G."/>
            <person name="Zhou J."/>
            <person name="Zhou Y."/>
            <person name="Nelson D."/>
            <person name="Lehrach H."/>
            <person name="Reinhardt R."/>
            <person name="Naylor S.L."/>
            <person name="Yang H."/>
            <person name="Olson M."/>
            <person name="Weinstock G."/>
            <person name="Gibbs R.A."/>
        </authorList>
    </citation>
    <scope>NUCLEOTIDE SEQUENCE [LARGE SCALE GENOMIC DNA]</scope>
</reference>
<reference key="6">
    <citation type="submission" date="2005-09" db="EMBL/GenBank/DDBJ databases">
        <authorList>
            <person name="Mural R.J."/>
            <person name="Istrail S."/>
            <person name="Sutton G."/>
            <person name="Florea L."/>
            <person name="Halpern A.L."/>
            <person name="Mobarry C.M."/>
            <person name="Lippert R."/>
            <person name="Walenz B."/>
            <person name="Shatkay H."/>
            <person name="Dew I."/>
            <person name="Miller J.R."/>
            <person name="Flanigan M.J."/>
            <person name="Edwards N.J."/>
            <person name="Bolanos R."/>
            <person name="Fasulo D."/>
            <person name="Halldorsson B.V."/>
            <person name="Hannenhalli S."/>
            <person name="Turner R."/>
            <person name="Yooseph S."/>
            <person name="Lu F."/>
            <person name="Nusskern D.R."/>
            <person name="Shue B.C."/>
            <person name="Zheng X.H."/>
            <person name="Zhong F."/>
            <person name="Delcher A.L."/>
            <person name="Huson D.H."/>
            <person name="Kravitz S.A."/>
            <person name="Mouchard L."/>
            <person name="Reinert K."/>
            <person name="Remington K.A."/>
            <person name="Clark A.G."/>
            <person name="Waterman M.S."/>
            <person name="Eichler E.E."/>
            <person name="Adams M.D."/>
            <person name="Hunkapiller M.W."/>
            <person name="Myers E.W."/>
            <person name="Venter J.C."/>
        </authorList>
    </citation>
    <scope>NUCLEOTIDE SEQUENCE [LARGE SCALE GENOMIC DNA]</scope>
</reference>
<reference key="7">
    <citation type="journal article" date="2004" name="Genome Res.">
        <title>The status, quality, and expansion of the NIH full-length cDNA project: the Mammalian Gene Collection (MGC).</title>
        <authorList>
            <consortium name="The MGC Project Team"/>
        </authorList>
    </citation>
    <scope>NUCLEOTIDE SEQUENCE [LARGE SCALE MRNA] (ISOFORM 1)</scope>
    <source>
        <tissue>Testis</tissue>
    </source>
</reference>
<reference key="8">
    <citation type="submission" date="2003-07" db="EMBL/GenBank/DDBJ databases">
        <title>Cloning and characterization of a novel human cDNA homology to murine TRA1 mRNA.</title>
        <authorList>
            <person name="Cui W.C."/>
            <person name="Yu L."/>
            <person name="Gao J."/>
            <person name="Fan Y.X."/>
            <person name="Xu Y.F."/>
            <person name="Zhao S.Y."/>
        </authorList>
    </citation>
    <scope>NUCLEOTIDE SEQUENCE [MRNA] OF 46-329 (ISOFORM 1)</scope>
</reference>
<reference key="9">
    <citation type="journal article" date="2008" name="J. Biol. Chem.">
        <title>Identification of Alix-type and non-Alix-type ALG-2-binding sites in human phospholipid scramblase 3: differential binding to an alternatively spliced isoform and amino acid-substituted mutants.</title>
        <authorList>
            <person name="Shibata H."/>
            <person name="Suzuki H."/>
            <person name="Kakiuchi T."/>
            <person name="Inuzuka T."/>
            <person name="Yoshida H."/>
            <person name="Mizuno T."/>
            <person name="Maki M."/>
        </authorList>
    </citation>
    <scope>INTERACTION WITH PDCD6</scope>
</reference>
<reference key="10">
    <citation type="journal article" date="2012" name="Biol. Chem.">
        <title>Biochemical and functional characterization of human phospholipid scramblase 4 (hPLSCR4).</title>
        <authorList>
            <person name="Francis V.G."/>
            <person name="Gummadi S.N."/>
        </authorList>
    </citation>
    <scope>FUNCTION</scope>
    <scope>TRANSPORTER ACTIVITY</scope>
    <scope>COFACTOR</scope>
    <scope>MUTAGENESIS OF ASP-290</scope>
</reference>
<reference evidence="14" key="11">
    <citation type="journal article" date="2011" name="J. Biol. Chem.">
        <title>A minimal nuclear localization signal (NLS) in human phospholipid scramblase 4 that binds only the minor NLS-binding site of importin alpha1.</title>
        <authorList>
            <person name="Lott K."/>
            <person name="Bhardwaj A."/>
            <person name="Sims P.J."/>
            <person name="Cingolani G."/>
        </authorList>
    </citation>
    <scope>X-RAY CRYSTALLOGRAPHY (2.50 ANGSTROMS) OF 271-283 IN COMPLEX WITH KPNA2</scope>
    <scope>SUBCELLULAR LOCATION</scope>
    <scope>INTERACTION WITH KPNA2</scope>
    <scope>MUTAGENESIS OF 197-CYS--SER-204; 277-ARG--TRP-279 AND ARG-277</scope>
</reference>
<evidence type="ECO:0000250" key="1">
    <source>
        <dbReference type="UniProtKB" id="O15162"/>
    </source>
</evidence>
<evidence type="ECO:0000255" key="2"/>
<evidence type="ECO:0000256" key="3">
    <source>
        <dbReference type="SAM" id="MobiDB-lite"/>
    </source>
</evidence>
<evidence type="ECO:0000269" key="4">
    <source>
    </source>
</evidence>
<evidence type="ECO:0000269" key="5">
    <source>
    </source>
</evidence>
<evidence type="ECO:0000269" key="6">
    <source>
    </source>
</evidence>
<evidence type="ECO:0000269" key="7">
    <source>
    </source>
</evidence>
<evidence type="ECO:0000269" key="8">
    <source ref="2"/>
</evidence>
<evidence type="ECO:0000303" key="9">
    <source>
    </source>
</evidence>
<evidence type="ECO:0000305" key="10"/>
<evidence type="ECO:0000305" key="11">
    <source>
    </source>
</evidence>
<evidence type="ECO:0000305" key="12">
    <source>
    </source>
</evidence>
<evidence type="ECO:0000312" key="13">
    <source>
        <dbReference type="HGNC" id="HGNC:16497"/>
    </source>
</evidence>
<evidence type="ECO:0007744" key="14">
    <source>
        <dbReference type="PDB" id="3Q5U"/>
    </source>
</evidence>
<dbReference type="EMBL" id="AF199023">
    <property type="protein sequence ID" value="AAF89960.1"/>
    <property type="molecule type" value="mRNA"/>
</dbReference>
<dbReference type="EMBL" id="AY550971">
    <property type="protein sequence ID" value="AAT52217.1"/>
    <property type="molecule type" value="mRNA"/>
</dbReference>
<dbReference type="EMBL" id="AK128442">
    <property type="protein sequence ID" value="BAC87442.1"/>
    <property type="molecule type" value="mRNA"/>
</dbReference>
<dbReference type="EMBL" id="AK290214">
    <property type="protein sequence ID" value="BAF82903.1"/>
    <property type="molecule type" value="mRNA"/>
</dbReference>
<dbReference type="EMBL" id="AL833760">
    <property type="protein sequence ID" value="CAH56232.1"/>
    <property type="molecule type" value="mRNA"/>
</dbReference>
<dbReference type="EMBL" id="AC092982">
    <property type="status" value="NOT_ANNOTATED_CDS"/>
    <property type="molecule type" value="Genomic_DNA"/>
</dbReference>
<dbReference type="EMBL" id="CH471052">
    <property type="protein sequence ID" value="EAW78935.1"/>
    <property type="molecule type" value="Genomic_DNA"/>
</dbReference>
<dbReference type="EMBL" id="BC028354">
    <property type="protein sequence ID" value="AAH28354.1"/>
    <property type="molecule type" value="mRNA"/>
</dbReference>
<dbReference type="EMBL" id="AF087887">
    <property type="protein sequence ID" value="AAP97186.1"/>
    <property type="status" value="ALT_FRAME"/>
    <property type="molecule type" value="mRNA"/>
</dbReference>
<dbReference type="CCDS" id="CCDS3133.1">
    <molecule id="Q9NRQ2-1"/>
</dbReference>
<dbReference type="CCDS" id="CCDS54651.1">
    <molecule id="Q9NRQ2-2"/>
</dbReference>
<dbReference type="RefSeq" id="NP_001121776.1">
    <molecule id="Q9NRQ2-1"/>
    <property type="nucleotide sequence ID" value="NM_001128304.2"/>
</dbReference>
<dbReference type="RefSeq" id="NP_001121777.1">
    <molecule id="Q9NRQ2-1"/>
    <property type="nucleotide sequence ID" value="NM_001128305.2"/>
</dbReference>
<dbReference type="RefSeq" id="NP_001121778.1">
    <property type="nucleotide sequence ID" value="NM_001128306.1"/>
</dbReference>
<dbReference type="RefSeq" id="NP_001170775.1">
    <molecule id="Q9NRQ2-2"/>
    <property type="nucleotide sequence ID" value="NM_001177304.2"/>
</dbReference>
<dbReference type="RefSeq" id="NP_065086.2">
    <molecule id="Q9NRQ2-1"/>
    <property type="nucleotide sequence ID" value="NM_020353.3"/>
</dbReference>
<dbReference type="RefSeq" id="XP_005247711.1">
    <molecule id="Q9NRQ2-1"/>
    <property type="nucleotide sequence ID" value="XM_005247654.3"/>
</dbReference>
<dbReference type="RefSeq" id="XP_005247712.1">
    <molecule id="Q9NRQ2-1"/>
    <property type="nucleotide sequence ID" value="XM_005247655.3"/>
</dbReference>
<dbReference type="RefSeq" id="XP_011511333.1">
    <molecule id="Q9NRQ2-1"/>
    <property type="nucleotide sequence ID" value="XM_011513031.3"/>
</dbReference>
<dbReference type="RefSeq" id="XP_024309454.1">
    <molecule id="Q9NRQ2-1"/>
    <property type="nucleotide sequence ID" value="XM_024453686.2"/>
</dbReference>
<dbReference type="PDB" id="3Q5U">
    <property type="method" value="X-ray"/>
    <property type="resolution" value="2.50 A"/>
    <property type="chains" value="B=271-283"/>
</dbReference>
<dbReference type="PDBsum" id="3Q5U"/>
<dbReference type="SMR" id="Q9NRQ2"/>
<dbReference type="BioGRID" id="121357">
    <property type="interactions" value="78"/>
</dbReference>
<dbReference type="FunCoup" id="Q9NRQ2">
    <property type="interactions" value="235"/>
</dbReference>
<dbReference type="IntAct" id="Q9NRQ2">
    <property type="interactions" value="76"/>
</dbReference>
<dbReference type="MINT" id="Q9NRQ2"/>
<dbReference type="STRING" id="9606.ENSP00000347038"/>
<dbReference type="TCDB" id="9.A.36.1.4">
    <property type="family name" value="the ca(2+)-dependent phospholipid scramblase (scramblase) family"/>
</dbReference>
<dbReference type="GlyGen" id="Q9NRQ2">
    <property type="glycosylation" value="2 sites"/>
</dbReference>
<dbReference type="iPTMnet" id="Q9NRQ2"/>
<dbReference type="PhosphoSitePlus" id="Q9NRQ2"/>
<dbReference type="SwissPalm" id="Q9NRQ2"/>
<dbReference type="BioMuta" id="PLSCR4"/>
<dbReference type="DMDM" id="212276457"/>
<dbReference type="jPOST" id="Q9NRQ2"/>
<dbReference type="MassIVE" id="Q9NRQ2"/>
<dbReference type="PaxDb" id="9606-ENSP00000347038"/>
<dbReference type="PeptideAtlas" id="Q9NRQ2"/>
<dbReference type="ProteomicsDB" id="82403">
    <molecule id="Q9NRQ2-1"/>
</dbReference>
<dbReference type="ProteomicsDB" id="82404">
    <molecule id="Q9NRQ2-2"/>
</dbReference>
<dbReference type="Pumba" id="Q9NRQ2"/>
<dbReference type="Antibodypedia" id="948">
    <property type="antibodies" value="124 antibodies from 25 providers"/>
</dbReference>
<dbReference type="DNASU" id="57088"/>
<dbReference type="Ensembl" id="ENST00000354952.7">
    <molecule id="Q9NRQ2-1"/>
    <property type="protein sequence ID" value="ENSP00000347038.2"/>
    <property type="gene ID" value="ENSG00000114698.15"/>
</dbReference>
<dbReference type="Ensembl" id="ENST00000433593.6">
    <molecule id="Q9NRQ2-2"/>
    <property type="protein sequence ID" value="ENSP00000415605.2"/>
    <property type="gene ID" value="ENSG00000114698.15"/>
</dbReference>
<dbReference type="Ensembl" id="ENST00000446574.6">
    <molecule id="Q9NRQ2-1"/>
    <property type="protein sequence ID" value="ENSP00000399315.2"/>
    <property type="gene ID" value="ENSG00000114698.15"/>
</dbReference>
<dbReference type="Ensembl" id="ENST00000493382.5">
    <molecule id="Q9NRQ2-1"/>
    <property type="protein sequence ID" value="ENSP00000419040.1"/>
    <property type="gene ID" value="ENSG00000114698.15"/>
</dbReference>
<dbReference type="GeneID" id="57088"/>
<dbReference type="KEGG" id="hsa:57088"/>
<dbReference type="MANE-Select" id="ENST00000354952.7">
    <property type="protein sequence ID" value="ENSP00000347038.2"/>
    <property type="RefSeq nucleotide sequence ID" value="NM_020353.3"/>
    <property type="RefSeq protein sequence ID" value="NP_065086.2"/>
</dbReference>
<dbReference type="UCSC" id="uc003evt.6">
    <molecule id="Q9NRQ2-1"/>
    <property type="organism name" value="human"/>
</dbReference>
<dbReference type="AGR" id="HGNC:16497"/>
<dbReference type="CTD" id="57088"/>
<dbReference type="DisGeNET" id="57088"/>
<dbReference type="GeneCards" id="PLSCR4"/>
<dbReference type="HGNC" id="HGNC:16497">
    <property type="gene designation" value="PLSCR4"/>
</dbReference>
<dbReference type="HPA" id="ENSG00000114698">
    <property type="expression patterns" value="Low tissue specificity"/>
</dbReference>
<dbReference type="MIM" id="607612">
    <property type="type" value="gene"/>
</dbReference>
<dbReference type="neXtProt" id="NX_Q9NRQ2"/>
<dbReference type="OpenTargets" id="ENSG00000114698"/>
<dbReference type="PharmGKB" id="PA33422"/>
<dbReference type="VEuPathDB" id="HostDB:ENSG00000114698"/>
<dbReference type="eggNOG" id="KOG0621">
    <property type="taxonomic scope" value="Eukaryota"/>
</dbReference>
<dbReference type="GeneTree" id="ENSGT00940000161947"/>
<dbReference type="HOGENOM" id="CLU_053024_0_0_1"/>
<dbReference type="InParanoid" id="Q9NRQ2"/>
<dbReference type="OMA" id="MMTSFET"/>
<dbReference type="OrthoDB" id="191150at2759"/>
<dbReference type="PAN-GO" id="Q9NRQ2">
    <property type="GO annotations" value="3 GO annotations based on evolutionary models"/>
</dbReference>
<dbReference type="PhylomeDB" id="Q9NRQ2"/>
<dbReference type="TreeFam" id="TF314939"/>
<dbReference type="BRENDA" id="7.6.2.1">
    <property type="organism ID" value="2681"/>
</dbReference>
<dbReference type="PathwayCommons" id="Q9NRQ2"/>
<dbReference type="SignaLink" id="Q9NRQ2"/>
<dbReference type="BioGRID-ORCS" id="57088">
    <property type="hits" value="9 hits in 1144 CRISPR screens"/>
</dbReference>
<dbReference type="ChiTaRS" id="PLSCR4">
    <property type="organism name" value="human"/>
</dbReference>
<dbReference type="EvolutionaryTrace" id="Q9NRQ2"/>
<dbReference type="GeneWiki" id="PLSCR4"/>
<dbReference type="GenomeRNAi" id="57088"/>
<dbReference type="Pharos" id="Q9NRQ2">
    <property type="development level" value="Tbio"/>
</dbReference>
<dbReference type="PRO" id="PR:Q9NRQ2"/>
<dbReference type="Proteomes" id="UP000005640">
    <property type="component" value="Chromosome 3"/>
</dbReference>
<dbReference type="RNAct" id="Q9NRQ2">
    <property type="molecule type" value="protein"/>
</dbReference>
<dbReference type="Bgee" id="ENSG00000114698">
    <property type="expression patterns" value="Expressed in germinal epithelium of ovary and 201 other cell types or tissues"/>
</dbReference>
<dbReference type="ExpressionAtlas" id="Q9NRQ2">
    <property type="expression patterns" value="baseline and differential"/>
</dbReference>
<dbReference type="GO" id="GO:0005634">
    <property type="term" value="C:nucleus"/>
    <property type="evidence" value="ECO:0000314"/>
    <property type="project" value="UniProtKB"/>
</dbReference>
<dbReference type="GO" id="GO:0005886">
    <property type="term" value="C:plasma membrane"/>
    <property type="evidence" value="ECO:0000314"/>
    <property type="project" value="UniProtKB"/>
</dbReference>
<dbReference type="GO" id="GO:0005509">
    <property type="term" value="F:calcium ion binding"/>
    <property type="evidence" value="ECO:0000303"/>
    <property type="project" value="UniProtKB"/>
</dbReference>
<dbReference type="GO" id="GO:0042609">
    <property type="term" value="F:CD4 receptor binding"/>
    <property type="evidence" value="ECO:0000353"/>
    <property type="project" value="UniProtKB"/>
</dbReference>
<dbReference type="GO" id="GO:0019899">
    <property type="term" value="F:enzyme binding"/>
    <property type="evidence" value="ECO:0000353"/>
    <property type="project" value="UniProtKB"/>
</dbReference>
<dbReference type="GO" id="GO:0017128">
    <property type="term" value="F:phospholipid scramblase activity"/>
    <property type="evidence" value="ECO:0000314"/>
    <property type="project" value="UniProtKB"/>
</dbReference>
<dbReference type="GO" id="GO:0017124">
    <property type="term" value="F:SH3 domain binding"/>
    <property type="evidence" value="ECO:0007669"/>
    <property type="project" value="UniProtKB-KW"/>
</dbReference>
<dbReference type="GO" id="GO:0061590">
    <property type="term" value="P:calcium activated phosphatidylcholine scrambling"/>
    <property type="evidence" value="ECO:0000314"/>
    <property type="project" value="UniProtKB"/>
</dbReference>
<dbReference type="GO" id="GO:0061589">
    <property type="term" value="P:calcium activated phosphatidylserine scrambling"/>
    <property type="evidence" value="ECO:0000314"/>
    <property type="project" value="UniProtKB"/>
</dbReference>
<dbReference type="GO" id="GO:0071222">
    <property type="term" value="P:cellular response to lipopolysaccharide"/>
    <property type="evidence" value="ECO:0007669"/>
    <property type="project" value="Ensembl"/>
</dbReference>
<dbReference type="GO" id="GO:0017121">
    <property type="term" value="P:plasma membrane phospholipid scrambling"/>
    <property type="evidence" value="ECO:0000318"/>
    <property type="project" value="GO_Central"/>
</dbReference>
<dbReference type="InterPro" id="IPR005552">
    <property type="entry name" value="Scramblase"/>
</dbReference>
<dbReference type="PANTHER" id="PTHR23248:SF28">
    <property type="entry name" value="PHOSPHOLIPID SCRAMBLASE 4"/>
    <property type="match status" value="1"/>
</dbReference>
<dbReference type="PANTHER" id="PTHR23248">
    <property type="entry name" value="PHOSPHOLIPID SCRAMBLASE-RELATED"/>
    <property type="match status" value="1"/>
</dbReference>
<dbReference type="Pfam" id="PF03803">
    <property type="entry name" value="Scramblase"/>
    <property type="match status" value="1"/>
</dbReference>
<gene>
    <name evidence="13" type="primary">PLSCR4</name>
    <name type="ORF">GIG43</name>
</gene>
<accession>Q9NRQ2</accession>
<accession>A8K2E9</accession>
<accession>Q2TTR3</accession>
<accession>Q658L3</accession>
<accession>Q6ZR73</accession>
<accession>Q7Z505</accession>